<organism>
    <name type="scientific">Photorhabdus laumondii subsp. laumondii (strain DSM 15139 / CIP 105565 / TT01)</name>
    <name type="common">Photorhabdus luminescens subsp. laumondii</name>
    <dbReference type="NCBI Taxonomy" id="243265"/>
    <lineage>
        <taxon>Bacteria</taxon>
        <taxon>Pseudomonadati</taxon>
        <taxon>Pseudomonadota</taxon>
        <taxon>Gammaproteobacteria</taxon>
        <taxon>Enterobacterales</taxon>
        <taxon>Morganellaceae</taxon>
        <taxon>Photorhabdus</taxon>
    </lineage>
</organism>
<dbReference type="EC" id="4.2.1.11" evidence="2"/>
<dbReference type="EMBL" id="BX571862">
    <property type="protein sequence ID" value="CAE13208.1"/>
    <property type="molecule type" value="Genomic_DNA"/>
</dbReference>
<dbReference type="RefSeq" id="WP_011145278.1">
    <property type="nucleotide sequence ID" value="NC_005126.1"/>
</dbReference>
<dbReference type="SMR" id="Q7N835"/>
<dbReference type="STRING" id="243265.plu0913"/>
<dbReference type="GeneID" id="48847203"/>
<dbReference type="KEGG" id="plu:plu0913"/>
<dbReference type="eggNOG" id="COG0148">
    <property type="taxonomic scope" value="Bacteria"/>
</dbReference>
<dbReference type="HOGENOM" id="CLU_031223_2_1_6"/>
<dbReference type="OrthoDB" id="9804716at2"/>
<dbReference type="UniPathway" id="UPA00109">
    <property type="reaction ID" value="UER00187"/>
</dbReference>
<dbReference type="Proteomes" id="UP000002514">
    <property type="component" value="Chromosome"/>
</dbReference>
<dbReference type="GO" id="GO:0009986">
    <property type="term" value="C:cell surface"/>
    <property type="evidence" value="ECO:0007669"/>
    <property type="project" value="UniProtKB-SubCell"/>
</dbReference>
<dbReference type="GO" id="GO:0005576">
    <property type="term" value="C:extracellular region"/>
    <property type="evidence" value="ECO:0007669"/>
    <property type="project" value="UniProtKB-SubCell"/>
</dbReference>
<dbReference type="GO" id="GO:0000015">
    <property type="term" value="C:phosphopyruvate hydratase complex"/>
    <property type="evidence" value="ECO:0007669"/>
    <property type="project" value="InterPro"/>
</dbReference>
<dbReference type="GO" id="GO:0000287">
    <property type="term" value="F:magnesium ion binding"/>
    <property type="evidence" value="ECO:0007669"/>
    <property type="project" value="UniProtKB-UniRule"/>
</dbReference>
<dbReference type="GO" id="GO:0004634">
    <property type="term" value="F:phosphopyruvate hydratase activity"/>
    <property type="evidence" value="ECO:0007669"/>
    <property type="project" value="UniProtKB-UniRule"/>
</dbReference>
<dbReference type="GO" id="GO:0006096">
    <property type="term" value="P:glycolytic process"/>
    <property type="evidence" value="ECO:0007669"/>
    <property type="project" value="UniProtKB-UniRule"/>
</dbReference>
<dbReference type="CDD" id="cd03313">
    <property type="entry name" value="enolase"/>
    <property type="match status" value="1"/>
</dbReference>
<dbReference type="FunFam" id="3.20.20.120:FF:000001">
    <property type="entry name" value="Enolase"/>
    <property type="match status" value="1"/>
</dbReference>
<dbReference type="FunFam" id="3.30.390.10:FF:000001">
    <property type="entry name" value="Enolase"/>
    <property type="match status" value="1"/>
</dbReference>
<dbReference type="Gene3D" id="3.20.20.120">
    <property type="entry name" value="Enolase-like C-terminal domain"/>
    <property type="match status" value="1"/>
</dbReference>
<dbReference type="Gene3D" id="3.30.390.10">
    <property type="entry name" value="Enolase-like, N-terminal domain"/>
    <property type="match status" value="1"/>
</dbReference>
<dbReference type="HAMAP" id="MF_00318">
    <property type="entry name" value="Enolase"/>
    <property type="match status" value="1"/>
</dbReference>
<dbReference type="InterPro" id="IPR000941">
    <property type="entry name" value="Enolase"/>
</dbReference>
<dbReference type="InterPro" id="IPR036849">
    <property type="entry name" value="Enolase-like_C_sf"/>
</dbReference>
<dbReference type="InterPro" id="IPR029017">
    <property type="entry name" value="Enolase-like_N"/>
</dbReference>
<dbReference type="InterPro" id="IPR020810">
    <property type="entry name" value="Enolase_C"/>
</dbReference>
<dbReference type="InterPro" id="IPR020809">
    <property type="entry name" value="Enolase_CS"/>
</dbReference>
<dbReference type="InterPro" id="IPR020811">
    <property type="entry name" value="Enolase_N"/>
</dbReference>
<dbReference type="NCBIfam" id="TIGR01060">
    <property type="entry name" value="eno"/>
    <property type="match status" value="1"/>
</dbReference>
<dbReference type="PANTHER" id="PTHR11902">
    <property type="entry name" value="ENOLASE"/>
    <property type="match status" value="1"/>
</dbReference>
<dbReference type="PANTHER" id="PTHR11902:SF1">
    <property type="entry name" value="ENOLASE"/>
    <property type="match status" value="1"/>
</dbReference>
<dbReference type="Pfam" id="PF00113">
    <property type="entry name" value="Enolase_C"/>
    <property type="match status" value="1"/>
</dbReference>
<dbReference type="Pfam" id="PF03952">
    <property type="entry name" value="Enolase_N"/>
    <property type="match status" value="1"/>
</dbReference>
<dbReference type="PIRSF" id="PIRSF001400">
    <property type="entry name" value="Enolase"/>
    <property type="match status" value="1"/>
</dbReference>
<dbReference type="PRINTS" id="PR00148">
    <property type="entry name" value="ENOLASE"/>
</dbReference>
<dbReference type="SFLD" id="SFLDS00001">
    <property type="entry name" value="Enolase"/>
    <property type="match status" value="1"/>
</dbReference>
<dbReference type="SFLD" id="SFLDF00002">
    <property type="entry name" value="enolase"/>
    <property type="match status" value="1"/>
</dbReference>
<dbReference type="SMART" id="SM01192">
    <property type="entry name" value="Enolase_C"/>
    <property type="match status" value="1"/>
</dbReference>
<dbReference type="SMART" id="SM01193">
    <property type="entry name" value="Enolase_N"/>
    <property type="match status" value="1"/>
</dbReference>
<dbReference type="SUPFAM" id="SSF51604">
    <property type="entry name" value="Enolase C-terminal domain-like"/>
    <property type="match status" value="1"/>
</dbReference>
<dbReference type="SUPFAM" id="SSF54826">
    <property type="entry name" value="Enolase N-terminal domain-like"/>
    <property type="match status" value="1"/>
</dbReference>
<dbReference type="PROSITE" id="PS00164">
    <property type="entry name" value="ENOLASE"/>
    <property type="match status" value="1"/>
</dbReference>
<gene>
    <name evidence="2" type="primary">eno</name>
    <name type="ordered locus">plu0913</name>
</gene>
<keyword id="KW-0963">Cytoplasm</keyword>
<keyword id="KW-0324">Glycolysis</keyword>
<keyword id="KW-0456">Lyase</keyword>
<keyword id="KW-0460">Magnesium</keyword>
<keyword id="KW-0479">Metal-binding</keyword>
<keyword id="KW-1185">Reference proteome</keyword>
<keyword id="KW-0964">Secreted</keyword>
<reference key="1">
    <citation type="journal article" date="2003" name="Nat. Biotechnol.">
        <title>The genome sequence of the entomopathogenic bacterium Photorhabdus luminescens.</title>
        <authorList>
            <person name="Duchaud E."/>
            <person name="Rusniok C."/>
            <person name="Frangeul L."/>
            <person name="Buchrieser C."/>
            <person name="Givaudan A."/>
            <person name="Taourit S."/>
            <person name="Bocs S."/>
            <person name="Boursaux-Eude C."/>
            <person name="Chandler M."/>
            <person name="Charles J.-F."/>
            <person name="Dassa E."/>
            <person name="Derose R."/>
            <person name="Derzelle S."/>
            <person name="Freyssinet G."/>
            <person name="Gaudriault S."/>
            <person name="Medigue C."/>
            <person name="Lanois A."/>
            <person name="Powell K."/>
            <person name="Siguier P."/>
            <person name="Vincent R."/>
            <person name="Wingate V."/>
            <person name="Zouine M."/>
            <person name="Glaser P."/>
            <person name="Boemare N."/>
            <person name="Danchin A."/>
            <person name="Kunst F."/>
        </authorList>
    </citation>
    <scope>NUCLEOTIDE SEQUENCE [LARGE SCALE GENOMIC DNA]</scope>
    <source>
        <strain>DSM 15139 / CIP 105565 / TT01</strain>
    </source>
</reference>
<name>ENO_PHOLL</name>
<feature type="initiator methionine" description="Removed" evidence="1">
    <location>
        <position position="1"/>
    </location>
</feature>
<feature type="chain" id="PRO_0000133942" description="Enolase">
    <location>
        <begin position="2"/>
        <end position="433"/>
    </location>
</feature>
<feature type="active site" description="Proton donor" evidence="2">
    <location>
        <position position="209"/>
    </location>
</feature>
<feature type="active site" description="Proton acceptor" evidence="2">
    <location>
        <position position="343"/>
    </location>
</feature>
<feature type="binding site" evidence="2">
    <location>
        <position position="167"/>
    </location>
    <ligand>
        <name>(2R)-2-phosphoglycerate</name>
        <dbReference type="ChEBI" id="CHEBI:58289"/>
    </ligand>
</feature>
<feature type="binding site" evidence="2">
    <location>
        <position position="246"/>
    </location>
    <ligand>
        <name>Mg(2+)</name>
        <dbReference type="ChEBI" id="CHEBI:18420"/>
    </ligand>
</feature>
<feature type="binding site" evidence="2">
    <location>
        <position position="291"/>
    </location>
    <ligand>
        <name>Mg(2+)</name>
        <dbReference type="ChEBI" id="CHEBI:18420"/>
    </ligand>
</feature>
<feature type="binding site" evidence="2">
    <location>
        <position position="318"/>
    </location>
    <ligand>
        <name>Mg(2+)</name>
        <dbReference type="ChEBI" id="CHEBI:18420"/>
    </ligand>
</feature>
<feature type="binding site" evidence="2">
    <location>
        <position position="343"/>
    </location>
    <ligand>
        <name>(2R)-2-phosphoglycerate</name>
        <dbReference type="ChEBI" id="CHEBI:58289"/>
    </ligand>
</feature>
<feature type="binding site" evidence="2">
    <location>
        <position position="372"/>
    </location>
    <ligand>
        <name>(2R)-2-phosphoglycerate</name>
        <dbReference type="ChEBI" id="CHEBI:58289"/>
    </ligand>
</feature>
<feature type="binding site" evidence="2">
    <location>
        <position position="373"/>
    </location>
    <ligand>
        <name>(2R)-2-phosphoglycerate</name>
        <dbReference type="ChEBI" id="CHEBI:58289"/>
    </ligand>
</feature>
<feature type="binding site" evidence="2">
    <location>
        <position position="394"/>
    </location>
    <ligand>
        <name>(2R)-2-phosphoglycerate</name>
        <dbReference type="ChEBI" id="CHEBI:58289"/>
    </ligand>
</feature>
<protein>
    <recommendedName>
        <fullName evidence="2">Enolase</fullName>
        <ecNumber evidence="2">4.2.1.11</ecNumber>
    </recommendedName>
    <alternativeName>
        <fullName evidence="2">2-phospho-D-glycerate hydro-lyase</fullName>
    </alternativeName>
    <alternativeName>
        <fullName evidence="2">2-phosphoglycerate dehydratase</fullName>
    </alternativeName>
</protein>
<sequence length="433" mass="45973">MSKIVKVIGREIIDSRGNPTVEAEVHLEGGFVGLAAAPSGASTGSREALELRDGDKSRFMGKGVLKAVDAVNGPIAQAVIGQDAKDQANIDKIMIDLDGTENKSQFGANAILAVSLANAKAAAAAKGMPLYEHIAELNGTPGKFSMPLPMMNIINGGEHADNNVDIQEFMIQPIGAKTLKEAVRIGSEVFHNLAKVLKAKGMSTAVGDEGGYAPNLESNAAALAAIKEAVEQAGYVLGKDVTLAMDCAASEFYNPETGNYELKGEGKTFTSQEFTHYLEDLTRKYPIVSIEDGLNESDWEGFAYQTKVLGEKIQLVGDDLFVTNTKILKEGIEKGIANSILIKFNQIGSLTETLAAIKMAKDAGYTAVISHRSGETEDATIADLAVGTAAGQIKTGSMSRSDRVAKYNQLIRIEEALGNRAPFYGLKEVKGQA</sequence>
<accession>Q7N835</accession>
<evidence type="ECO:0000250" key="1"/>
<evidence type="ECO:0000255" key="2">
    <source>
        <dbReference type="HAMAP-Rule" id="MF_00318"/>
    </source>
</evidence>
<proteinExistence type="inferred from homology"/>
<comment type="function">
    <text evidence="2">Catalyzes the reversible conversion of 2-phosphoglycerate (2-PG) into phosphoenolpyruvate (PEP). It is essential for the degradation of carbohydrates via glycolysis.</text>
</comment>
<comment type="catalytic activity">
    <reaction evidence="2">
        <text>(2R)-2-phosphoglycerate = phosphoenolpyruvate + H2O</text>
        <dbReference type="Rhea" id="RHEA:10164"/>
        <dbReference type="ChEBI" id="CHEBI:15377"/>
        <dbReference type="ChEBI" id="CHEBI:58289"/>
        <dbReference type="ChEBI" id="CHEBI:58702"/>
        <dbReference type="EC" id="4.2.1.11"/>
    </reaction>
</comment>
<comment type="cofactor">
    <cofactor evidence="2">
        <name>Mg(2+)</name>
        <dbReference type="ChEBI" id="CHEBI:18420"/>
    </cofactor>
    <text evidence="2">Binds a second Mg(2+) ion via substrate during catalysis.</text>
</comment>
<comment type="pathway">
    <text evidence="2">Carbohydrate degradation; glycolysis; pyruvate from D-glyceraldehyde 3-phosphate: step 4/5.</text>
</comment>
<comment type="subunit">
    <text evidence="2">Component of the RNA degradosome, a multiprotein complex involved in RNA processing and mRNA degradation.</text>
</comment>
<comment type="subcellular location">
    <subcellularLocation>
        <location evidence="2">Cytoplasm</location>
    </subcellularLocation>
    <subcellularLocation>
        <location evidence="2">Secreted</location>
    </subcellularLocation>
    <subcellularLocation>
        <location evidence="2">Cell surface</location>
    </subcellularLocation>
    <text evidence="2">Fractions of enolase are present in both the cytoplasm and on the cell surface.</text>
</comment>
<comment type="similarity">
    <text evidence="2">Belongs to the enolase family.</text>
</comment>